<dbReference type="EMBL" id="CP000744">
    <property type="protein sequence ID" value="ABR82722.1"/>
    <property type="molecule type" value="Genomic_DNA"/>
</dbReference>
<dbReference type="RefSeq" id="WP_003092643.1">
    <property type="nucleotide sequence ID" value="NC_009656.1"/>
</dbReference>
<dbReference type="SMR" id="A6V123"/>
<dbReference type="GeneID" id="77219761"/>
<dbReference type="KEGG" id="pap:PSPA7_1374"/>
<dbReference type="HOGENOM" id="CLU_100590_5_1_6"/>
<dbReference type="Proteomes" id="UP000001582">
    <property type="component" value="Chromosome"/>
</dbReference>
<dbReference type="GO" id="GO:0005737">
    <property type="term" value="C:cytoplasm"/>
    <property type="evidence" value="ECO:0007669"/>
    <property type="project" value="UniProtKB-ARBA"/>
</dbReference>
<dbReference type="GO" id="GO:0015935">
    <property type="term" value="C:small ribosomal subunit"/>
    <property type="evidence" value="ECO:0007669"/>
    <property type="project" value="TreeGrafter"/>
</dbReference>
<dbReference type="GO" id="GO:0003735">
    <property type="term" value="F:structural constituent of ribosome"/>
    <property type="evidence" value="ECO:0007669"/>
    <property type="project" value="InterPro"/>
</dbReference>
<dbReference type="GO" id="GO:0006412">
    <property type="term" value="P:translation"/>
    <property type="evidence" value="ECO:0007669"/>
    <property type="project" value="UniProtKB-UniRule"/>
</dbReference>
<dbReference type="FunFam" id="3.30.1320.10:FF:000001">
    <property type="entry name" value="30S ribosomal protein S16"/>
    <property type="match status" value="1"/>
</dbReference>
<dbReference type="Gene3D" id="3.30.1320.10">
    <property type="match status" value="1"/>
</dbReference>
<dbReference type="HAMAP" id="MF_00385">
    <property type="entry name" value="Ribosomal_bS16"/>
    <property type="match status" value="1"/>
</dbReference>
<dbReference type="InterPro" id="IPR000307">
    <property type="entry name" value="Ribosomal_bS16"/>
</dbReference>
<dbReference type="InterPro" id="IPR023803">
    <property type="entry name" value="Ribosomal_bS16_dom_sf"/>
</dbReference>
<dbReference type="NCBIfam" id="TIGR00002">
    <property type="entry name" value="S16"/>
    <property type="match status" value="1"/>
</dbReference>
<dbReference type="PANTHER" id="PTHR12919">
    <property type="entry name" value="30S RIBOSOMAL PROTEIN S16"/>
    <property type="match status" value="1"/>
</dbReference>
<dbReference type="PANTHER" id="PTHR12919:SF20">
    <property type="entry name" value="SMALL RIBOSOMAL SUBUNIT PROTEIN BS16M"/>
    <property type="match status" value="1"/>
</dbReference>
<dbReference type="Pfam" id="PF00886">
    <property type="entry name" value="Ribosomal_S16"/>
    <property type="match status" value="1"/>
</dbReference>
<dbReference type="SUPFAM" id="SSF54565">
    <property type="entry name" value="Ribosomal protein S16"/>
    <property type="match status" value="1"/>
</dbReference>
<comment type="similarity">
    <text evidence="1">Belongs to the bacterial ribosomal protein bS16 family.</text>
</comment>
<sequence length="83" mass="9204">MVTIRLARGGSKKRPFYHLTVTNSRNARDGRFVERIGFFNPVATGGEVRLSVDQERATYWLGQGAQPSERVAQLLKDAAKANA</sequence>
<organism>
    <name type="scientific">Pseudomonas paraeruginosa (strain DSM 24068 / PA7)</name>
    <name type="common">Pseudomonas aeruginosa (strain PA7)</name>
    <dbReference type="NCBI Taxonomy" id="381754"/>
    <lineage>
        <taxon>Bacteria</taxon>
        <taxon>Pseudomonadati</taxon>
        <taxon>Pseudomonadota</taxon>
        <taxon>Gammaproteobacteria</taxon>
        <taxon>Pseudomonadales</taxon>
        <taxon>Pseudomonadaceae</taxon>
        <taxon>Pseudomonas</taxon>
        <taxon>Pseudomonas paraeruginosa</taxon>
    </lineage>
</organism>
<feature type="chain" id="PRO_1000049319" description="Small ribosomal subunit protein bS16">
    <location>
        <begin position="1"/>
        <end position="83"/>
    </location>
</feature>
<name>RS16_PSEP7</name>
<evidence type="ECO:0000255" key="1">
    <source>
        <dbReference type="HAMAP-Rule" id="MF_00385"/>
    </source>
</evidence>
<evidence type="ECO:0000305" key="2"/>
<proteinExistence type="inferred from homology"/>
<keyword id="KW-0687">Ribonucleoprotein</keyword>
<keyword id="KW-0689">Ribosomal protein</keyword>
<accession>A6V123</accession>
<gene>
    <name evidence="1" type="primary">rpsP</name>
    <name type="ordered locus">PSPA7_1374</name>
</gene>
<protein>
    <recommendedName>
        <fullName evidence="1">Small ribosomal subunit protein bS16</fullName>
    </recommendedName>
    <alternativeName>
        <fullName evidence="2">30S ribosomal protein S16</fullName>
    </alternativeName>
</protein>
<reference key="1">
    <citation type="submission" date="2007-06" db="EMBL/GenBank/DDBJ databases">
        <authorList>
            <person name="Dodson R.J."/>
            <person name="Harkins D."/>
            <person name="Paulsen I.T."/>
        </authorList>
    </citation>
    <scope>NUCLEOTIDE SEQUENCE [LARGE SCALE GENOMIC DNA]</scope>
    <source>
        <strain>DSM 24068 / PA7</strain>
    </source>
</reference>